<gene>
    <name type="primary">WNK9</name>
    <name type="ordered locus">At5g28080</name>
    <name type="ORF">T24G3.10</name>
</gene>
<proteinExistence type="evidence at transcript level"/>
<organism>
    <name type="scientific">Arabidopsis thaliana</name>
    <name type="common">Mouse-ear cress</name>
    <dbReference type="NCBI Taxonomy" id="3702"/>
    <lineage>
        <taxon>Eukaryota</taxon>
        <taxon>Viridiplantae</taxon>
        <taxon>Streptophyta</taxon>
        <taxon>Embryophyta</taxon>
        <taxon>Tracheophyta</taxon>
        <taxon>Spermatophyta</taxon>
        <taxon>Magnoliopsida</taxon>
        <taxon>eudicotyledons</taxon>
        <taxon>Gunneridae</taxon>
        <taxon>Pentapetalae</taxon>
        <taxon>rosids</taxon>
        <taxon>malvids</taxon>
        <taxon>Brassicales</taxon>
        <taxon>Brassicaceae</taxon>
        <taxon>Camelineae</taxon>
        <taxon>Arabidopsis</taxon>
    </lineage>
</organism>
<reference key="1">
    <citation type="journal article" date="2000" name="Nature">
        <title>Sequence and analysis of chromosome 5 of the plant Arabidopsis thaliana.</title>
        <authorList>
            <person name="Tabata S."/>
            <person name="Kaneko T."/>
            <person name="Nakamura Y."/>
            <person name="Kotani H."/>
            <person name="Kato T."/>
            <person name="Asamizu E."/>
            <person name="Miyajima N."/>
            <person name="Sasamoto S."/>
            <person name="Kimura T."/>
            <person name="Hosouchi T."/>
            <person name="Kawashima K."/>
            <person name="Kohara M."/>
            <person name="Matsumoto M."/>
            <person name="Matsuno A."/>
            <person name="Muraki A."/>
            <person name="Nakayama S."/>
            <person name="Nakazaki N."/>
            <person name="Naruo K."/>
            <person name="Okumura S."/>
            <person name="Shinpo S."/>
            <person name="Takeuchi C."/>
            <person name="Wada T."/>
            <person name="Watanabe A."/>
            <person name="Yamada M."/>
            <person name="Yasuda M."/>
            <person name="Sato S."/>
            <person name="de la Bastide M."/>
            <person name="Huang E."/>
            <person name="Spiegel L."/>
            <person name="Gnoj L."/>
            <person name="O'Shaughnessy A."/>
            <person name="Preston R."/>
            <person name="Habermann K."/>
            <person name="Murray J."/>
            <person name="Johnson D."/>
            <person name="Rohlfing T."/>
            <person name="Nelson J."/>
            <person name="Stoneking T."/>
            <person name="Pepin K."/>
            <person name="Spieth J."/>
            <person name="Sekhon M."/>
            <person name="Armstrong J."/>
            <person name="Becker M."/>
            <person name="Belter E."/>
            <person name="Cordum H."/>
            <person name="Cordes M."/>
            <person name="Courtney L."/>
            <person name="Courtney W."/>
            <person name="Dante M."/>
            <person name="Du H."/>
            <person name="Edwards J."/>
            <person name="Fryman J."/>
            <person name="Haakensen B."/>
            <person name="Lamar E."/>
            <person name="Latreille P."/>
            <person name="Leonard S."/>
            <person name="Meyer R."/>
            <person name="Mulvaney E."/>
            <person name="Ozersky P."/>
            <person name="Riley A."/>
            <person name="Strowmatt C."/>
            <person name="Wagner-McPherson C."/>
            <person name="Wollam A."/>
            <person name="Yoakum M."/>
            <person name="Bell M."/>
            <person name="Dedhia N."/>
            <person name="Parnell L."/>
            <person name="Shah R."/>
            <person name="Rodriguez M."/>
            <person name="Hoon See L."/>
            <person name="Vil D."/>
            <person name="Baker J."/>
            <person name="Kirchoff K."/>
            <person name="Toth K."/>
            <person name="King L."/>
            <person name="Bahret A."/>
            <person name="Miller B."/>
            <person name="Marra M.A."/>
            <person name="Martienssen R."/>
            <person name="McCombie W.R."/>
            <person name="Wilson R.K."/>
            <person name="Murphy G."/>
            <person name="Bancroft I."/>
            <person name="Volckaert G."/>
            <person name="Wambutt R."/>
            <person name="Duesterhoeft A."/>
            <person name="Stiekema W."/>
            <person name="Pohl T."/>
            <person name="Entian K.-D."/>
            <person name="Terryn N."/>
            <person name="Hartley N."/>
            <person name="Bent E."/>
            <person name="Johnson S."/>
            <person name="Langham S.-A."/>
            <person name="McCullagh B."/>
            <person name="Robben J."/>
            <person name="Grymonprez B."/>
            <person name="Zimmermann W."/>
            <person name="Ramsperger U."/>
            <person name="Wedler H."/>
            <person name="Balke K."/>
            <person name="Wedler E."/>
            <person name="Peters S."/>
            <person name="van Staveren M."/>
            <person name="Dirkse W."/>
            <person name="Mooijman P."/>
            <person name="Klein Lankhorst R."/>
            <person name="Weitzenegger T."/>
            <person name="Bothe G."/>
            <person name="Rose M."/>
            <person name="Hauf J."/>
            <person name="Berneiser S."/>
            <person name="Hempel S."/>
            <person name="Feldpausch M."/>
            <person name="Lamberth S."/>
            <person name="Villarroel R."/>
            <person name="Gielen J."/>
            <person name="Ardiles W."/>
            <person name="Bents O."/>
            <person name="Lemcke K."/>
            <person name="Kolesov G."/>
            <person name="Mayer K.F.X."/>
            <person name="Rudd S."/>
            <person name="Schoof H."/>
            <person name="Schueller C."/>
            <person name="Zaccaria P."/>
            <person name="Mewes H.-W."/>
            <person name="Bevan M."/>
            <person name="Fransz P.F."/>
        </authorList>
    </citation>
    <scope>NUCLEOTIDE SEQUENCE [LARGE SCALE GENOMIC DNA]</scope>
    <source>
        <strain>cv. Columbia</strain>
    </source>
</reference>
<reference key="2">
    <citation type="journal article" date="2017" name="Plant J.">
        <title>Araport11: a complete reannotation of the Arabidopsis thaliana reference genome.</title>
        <authorList>
            <person name="Cheng C.Y."/>
            <person name="Krishnakumar V."/>
            <person name="Chan A.P."/>
            <person name="Thibaud-Nissen F."/>
            <person name="Schobel S."/>
            <person name="Town C.D."/>
        </authorList>
    </citation>
    <scope>GENOME REANNOTATION</scope>
    <source>
        <strain>cv. Columbia</strain>
    </source>
</reference>
<reference key="3">
    <citation type="submission" date="2006-07" db="EMBL/GenBank/DDBJ databases">
        <title>Large-scale analysis of RIKEN Arabidopsis full-length (RAFL) cDNAs.</title>
        <authorList>
            <person name="Totoki Y."/>
            <person name="Seki M."/>
            <person name="Ishida J."/>
            <person name="Nakajima M."/>
            <person name="Enju A."/>
            <person name="Kamiya A."/>
            <person name="Narusaka M."/>
            <person name="Shin-i T."/>
            <person name="Nakagawa M."/>
            <person name="Sakamoto N."/>
            <person name="Oishi K."/>
            <person name="Kohara Y."/>
            <person name="Kobayashi M."/>
            <person name="Toyoda A."/>
            <person name="Sakaki Y."/>
            <person name="Sakurai T."/>
            <person name="Iida K."/>
            <person name="Akiyama K."/>
            <person name="Satou M."/>
            <person name="Toyoda T."/>
            <person name="Konagaya A."/>
            <person name="Carninci P."/>
            <person name="Kawai J."/>
            <person name="Hayashizaki Y."/>
            <person name="Shinozaki K."/>
        </authorList>
    </citation>
    <scope>NUCLEOTIDE SEQUENCE [LARGE SCALE MRNA]</scope>
    <source>
        <strain>cv. Columbia</strain>
    </source>
</reference>
<reference key="4">
    <citation type="submission" date="2004-11" db="EMBL/GenBank/DDBJ databases">
        <title>Arabidopsis ORF clones.</title>
        <authorList>
            <person name="Shinn P."/>
            <person name="Chen H."/>
            <person name="Cheuk R.F."/>
            <person name="Kim C.J."/>
            <person name="Ecker J.R."/>
        </authorList>
    </citation>
    <scope>NUCLEOTIDE SEQUENCE [LARGE SCALE MRNA] OF 4-492</scope>
    <source>
        <strain>cv. Columbia</strain>
    </source>
</reference>
<comment type="function">
    <text evidence="1">May regulate flowering time by modulating the photoperiod pathway.</text>
</comment>
<comment type="catalytic activity">
    <reaction>
        <text>L-seryl-[protein] + ATP = O-phospho-L-seryl-[protein] + ADP + H(+)</text>
        <dbReference type="Rhea" id="RHEA:17989"/>
        <dbReference type="Rhea" id="RHEA-COMP:9863"/>
        <dbReference type="Rhea" id="RHEA-COMP:11604"/>
        <dbReference type="ChEBI" id="CHEBI:15378"/>
        <dbReference type="ChEBI" id="CHEBI:29999"/>
        <dbReference type="ChEBI" id="CHEBI:30616"/>
        <dbReference type="ChEBI" id="CHEBI:83421"/>
        <dbReference type="ChEBI" id="CHEBI:456216"/>
        <dbReference type="EC" id="2.7.11.1"/>
    </reaction>
</comment>
<comment type="catalytic activity">
    <reaction>
        <text>L-threonyl-[protein] + ATP = O-phospho-L-threonyl-[protein] + ADP + H(+)</text>
        <dbReference type="Rhea" id="RHEA:46608"/>
        <dbReference type="Rhea" id="RHEA-COMP:11060"/>
        <dbReference type="Rhea" id="RHEA-COMP:11605"/>
        <dbReference type="ChEBI" id="CHEBI:15378"/>
        <dbReference type="ChEBI" id="CHEBI:30013"/>
        <dbReference type="ChEBI" id="CHEBI:30616"/>
        <dbReference type="ChEBI" id="CHEBI:61977"/>
        <dbReference type="ChEBI" id="CHEBI:456216"/>
        <dbReference type="EC" id="2.7.11.1"/>
    </reaction>
</comment>
<comment type="alternative products">
    <event type="alternative splicing"/>
    <isoform>
        <id>Q2V338-1</id>
        <name>1</name>
        <sequence type="displayed"/>
    </isoform>
    <text>A number of isoforms are produced. According to EST sequences.</text>
</comment>
<comment type="similarity">
    <text evidence="4">Belongs to the protein kinase superfamily. Ser/Thr protein kinase family. WNK subfamily.</text>
</comment>
<comment type="caution">
    <text evidence="2">Was named WNK/'with no lysine(K)' because key residues for catalysis, including the lysine involved in ATP binding, are either not conserved or differ compared to the residues described in other kinase family proteins.</text>
</comment>
<comment type="sequence caution" evidence="5">
    <conflict type="erroneous initiation">
        <sequence resource="EMBL-CDS" id="AAU90048"/>
    </conflict>
</comment>
<dbReference type="EC" id="2.7.11.1"/>
<dbReference type="EMBL" id="AC006192">
    <property type="status" value="NOT_ANNOTATED_CDS"/>
    <property type="molecule type" value="Genomic_DNA"/>
</dbReference>
<dbReference type="EMBL" id="CP002688">
    <property type="protein sequence ID" value="AED93774.1"/>
    <property type="molecule type" value="Genomic_DNA"/>
</dbReference>
<dbReference type="EMBL" id="AK228774">
    <property type="protein sequence ID" value="BAF00673.1"/>
    <property type="molecule type" value="mRNA"/>
</dbReference>
<dbReference type="EMBL" id="BT015758">
    <property type="protein sequence ID" value="AAU90048.1"/>
    <property type="status" value="ALT_INIT"/>
    <property type="molecule type" value="mRNA"/>
</dbReference>
<dbReference type="EMBL" id="BT020173">
    <property type="protein sequence ID" value="AAV43775.1"/>
    <property type="molecule type" value="mRNA"/>
</dbReference>
<dbReference type="RefSeq" id="NP_001031960.1">
    <molecule id="Q2V338-1"/>
    <property type="nucleotide sequence ID" value="NM_001036883.2"/>
</dbReference>
<dbReference type="RefSeq" id="NP_001332380.1">
    <property type="nucleotide sequence ID" value="NM_001344062.1"/>
</dbReference>
<dbReference type="RefSeq" id="NP_001332381.1">
    <property type="nucleotide sequence ID" value="NM_001344063.1"/>
</dbReference>
<dbReference type="RefSeq" id="NP_001332382.1">
    <property type="nucleotide sequence ID" value="NM_001344060.1"/>
</dbReference>
<dbReference type="RefSeq" id="NP_001332383.1">
    <property type="nucleotide sequence ID" value="NM_001344061.1"/>
</dbReference>
<dbReference type="RefSeq" id="NP_001332384.1">
    <property type="nucleotide sequence ID" value="NM_001344059.1"/>
</dbReference>
<dbReference type="SMR" id="Q2V338"/>
<dbReference type="FunCoup" id="Q2V338">
    <property type="interactions" value="1138"/>
</dbReference>
<dbReference type="STRING" id="3702.Q2V338"/>
<dbReference type="PaxDb" id="3702-AT5G28080.2"/>
<dbReference type="EnsemblPlants" id="AT5G28080.2">
    <molecule id="Q2V338-1"/>
    <property type="protein sequence ID" value="AT5G28080.2"/>
    <property type="gene ID" value="AT5G28080"/>
</dbReference>
<dbReference type="GeneID" id="832881"/>
<dbReference type="Gramene" id="AT5G28080.2">
    <molecule id="Q2V338-1"/>
    <property type="protein sequence ID" value="AT5G28080.2"/>
    <property type="gene ID" value="AT5G28080"/>
</dbReference>
<dbReference type="KEGG" id="ath:AT5G28080"/>
<dbReference type="Araport" id="AT5G28080"/>
<dbReference type="TAIR" id="AT5G28080">
    <property type="gene designation" value="WNK9"/>
</dbReference>
<dbReference type="eggNOG" id="KOG0584">
    <property type="taxonomic scope" value="Eukaryota"/>
</dbReference>
<dbReference type="HOGENOM" id="CLU_000288_142_2_1"/>
<dbReference type="InParanoid" id="Q2V338"/>
<dbReference type="OMA" id="NGCEEKH"/>
<dbReference type="PhylomeDB" id="Q2V338"/>
<dbReference type="PRO" id="PR:Q2V338"/>
<dbReference type="Proteomes" id="UP000006548">
    <property type="component" value="Chromosome 5"/>
</dbReference>
<dbReference type="ExpressionAtlas" id="Q2V338">
    <property type="expression patterns" value="baseline and differential"/>
</dbReference>
<dbReference type="GO" id="GO:0005524">
    <property type="term" value="F:ATP binding"/>
    <property type="evidence" value="ECO:0007669"/>
    <property type="project" value="UniProtKB-KW"/>
</dbReference>
<dbReference type="GO" id="GO:0004672">
    <property type="term" value="F:protein kinase activity"/>
    <property type="evidence" value="ECO:0000304"/>
    <property type="project" value="TAIR"/>
</dbReference>
<dbReference type="GO" id="GO:0106310">
    <property type="term" value="F:protein serine kinase activity"/>
    <property type="evidence" value="ECO:0007669"/>
    <property type="project" value="RHEA"/>
</dbReference>
<dbReference type="GO" id="GO:0004674">
    <property type="term" value="F:protein serine/threonine kinase activity"/>
    <property type="evidence" value="ECO:0007669"/>
    <property type="project" value="UniProtKB-KW"/>
</dbReference>
<dbReference type="GO" id="GO:0006468">
    <property type="term" value="P:protein phosphorylation"/>
    <property type="evidence" value="ECO:0000304"/>
    <property type="project" value="TAIR"/>
</dbReference>
<dbReference type="CDD" id="cd13983">
    <property type="entry name" value="STKc_WNK"/>
    <property type="match status" value="1"/>
</dbReference>
<dbReference type="FunFam" id="3.30.200.20:FF:000075">
    <property type="entry name" value="Probable serine/threonine-protein kinase WNK1"/>
    <property type="match status" value="1"/>
</dbReference>
<dbReference type="FunFam" id="1.10.510.10:FF:000046">
    <property type="entry name" value="probable serine/threonine-protein kinase WNK9"/>
    <property type="match status" value="1"/>
</dbReference>
<dbReference type="FunFam" id="3.10.20.90:FF:000255">
    <property type="entry name" value="probable serine/threonine-protein kinase WNK9"/>
    <property type="match status" value="1"/>
</dbReference>
<dbReference type="Gene3D" id="3.10.20.90">
    <property type="entry name" value="Phosphatidylinositol 3-kinase Catalytic Subunit, Chain A, domain 1"/>
    <property type="match status" value="1"/>
</dbReference>
<dbReference type="Gene3D" id="3.30.200.20">
    <property type="entry name" value="Phosphorylase Kinase, domain 1"/>
    <property type="match status" value="1"/>
</dbReference>
<dbReference type="Gene3D" id="1.10.510.10">
    <property type="entry name" value="Transferase(Phosphotransferase) domain 1"/>
    <property type="match status" value="1"/>
</dbReference>
<dbReference type="InterPro" id="IPR011009">
    <property type="entry name" value="Kinase-like_dom_sf"/>
</dbReference>
<dbReference type="InterPro" id="IPR024678">
    <property type="entry name" value="Kinase_OSR1/WNK_CCT"/>
</dbReference>
<dbReference type="InterPro" id="IPR000719">
    <property type="entry name" value="Prot_kinase_dom"/>
</dbReference>
<dbReference type="InterPro" id="IPR008271">
    <property type="entry name" value="Ser/Thr_kinase_AS"/>
</dbReference>
<dbReference type="InterPro" id="IPR050588">
    <property type="entry name" value="WNK_Ser-Thr_kinase"/>
</dbReference>
<dbReference type="PANTHER" id="PTHR13902">
    <property type="entry name" value="SERINE/THREONINE-PROTEIN KINASE WNK WITH NO LYSINE -RELATED"/>
    <property type="match status" value="1"/>
</dbReference>
<dbReference type="Pfam" id="PF12202">
    <property type="entry name" value="OSR1_C"/>
    <property type="match status" value="1"/>
</dbReference>
<dbReference type="Pfam" id="PF00069">
    <property type="entry name" value="Pkinase"/>
    <property type="match status" value="1"/>
</dbReference>
<dbReference type="SMART" id="SM00220">
    <property type="entry name" value="S_TKc"/>
    <property type="match status" value="1"/>
</dbReference>
<dbReference type="SUPFAM" id="SSF56112">
    <property type="entry name" value="Protein kinase-like (PK-like)"/>
    <property type="match status" value="1"/>
</dbReference>
<dbReference type="PROSITE" id="PS50011">
    <property type="entry name" value="PROTEIN_KINASE_DOM"/>
    <property type="match status" value="1"/>
</dbReference>
<dbReference type="PROSITE" id="PS00108">
    <property type="entry name" value="PROTEIN_KINASE_ST"/>
    <property type="match status" value="1"/>
</dbReference>
<sequence length="492" mass="56915">MMNNLSHLESDYSEYVEVDPTGRYGRYNEVLGKGSSKTVYRGFDEYQGIEVAWNQVKLYDFLQSPQELERLYCEIHLLKTLKHKSIMKFYASWVDTDNRNINFVTEMFTSGTLRQYRLKHKRVNIRAVKNWCRQILRGLNYLHTHDPPVIHRDLKCDNIFINGNQGEVKIGDLGLAACLQHSHAAHCVGTPEFMAPEVYKEEYNQLVDIYSFGMCVLEMVTFDYPYSECSHPAQIYKRVISGKKPDGLDKVKDPEVRGFIEKCLATVSLRLSACELLDDHFLCIDESDMRRVESEKGLIDEAGTPLRHSYHIPHYSNGYYSLYNQNQWDYNGDETVESHEIDLLEFQNDDDEEEEDKRFGSVDISIKGKRRDNGDGLFLRLKTVNKEGCVRNIYFPFDIETDTAISVAREMVEELEMDDRDVTKIANMIDGEIASLVPNWSIFCSSESNRSSVGSVMDFNEMQCGRDGCEEKHGRFEEITFEITVNDSDEED</sequence>
<feature type="chain" id="PRO_0000351667" description="Probable serine/threonine-protein kinase WNK9">
    <location>
        <begin position="1"/>
        <end position="492"/>
    </location>
</feature>
<feature type="domain" description="Protein kinase" evidence="4">
    <location>
        <begin position="25"/>
        <end position="282"/>
    </location>
</feature>
<feature type="active site" description="Proton acceptor" evidence="3">
    <location>
        <position position="172"/>
    </location>
</feature>
<feature type="binding site" evidence="2">
    <location>
        <begin position="105"/>
        <end position="108"/>
    </location>
    <ligand>
        <name>ATP</name>
        <dbReference type="ChEBI" id="CHEBI:30616"/>
    </ligand>
</feature>
<feature type="binding site" evidence="2">
    <location>
        <position position="155"/>
    </location>
    <ligand>
        <name>ATP</name>
        <dbReference type="ChEBI" id="CHEBI:30616"/>
    </ligand>
</feature>
<evidence type="ECO:0000250" key="1"/>
<evidence type="ECO:0000250" key="2">
    <source>
        <dbReference type="UniProtKB" id="Q9H4A3"/>
    </source>
</evidence>
<evidence type="ECO:0000250" key="3">
    <source>
        <dbReference type="UniProtKB" id="Q9JIH7"/>
    </source>
</evidence>
<evidence type="ECO:0000255" key="4">
    <source>
        <dbReference type="PROSITE-ProRule" id="PRU00159"/>
    </source>
</evidence>
<evidence type="ECO:0000305" key="5"/>
<protein>
    <recommendedName>
        <fullName>Probable serine/threonine-protein kinase WNK9</fullName>
        <shortName>AtWNK9</shortName>
        <ecNumber>2.7.11.1</ecNumber>
    </recommendedName>
    <alternativeName>
        <fullName>Protein kinase with no lysine 9</fullName>
    </alternativeName>
</protein>
<name>WNK9_ARATH</name>
<accession>Q2V338</accession>
<accession>Q5XF58</accession>
<keyword id="KW-0025">Alternative splicing</keyword>
<keyword id="KW-0067">ATP-binding</keyword>
<keyword id="KW-0418">Kinase</keyword>
<keyword id="KW-0547">Nucleotide-binding</keyword>
<keyword id="KW-1185">Reference proteome</keyword>
<keyword id="KW-0723">Serine/threonine-protein kinase</keyword>
<keyword id="KW-0808">Transferase</keyword>